<feature type="chain" id="PRO_1000094114" description="Ribonuclease 3">
    <location>
        <begin position="1"/>
        <end position="238"/>
    </location>
</feature>
<feature type="domain" description="RNase III" evidence="1">
    <location>
        <begin position="17"/>
        <end position="140"/>
    </location>
</feature>
<feature type="domain" description="DRBM" evidence="1">
    <location>
        <begin position="167"/>
        <end position="236"/>
    </location>
</feature>
<feature type="active site" evidence="1">
    <location>
        <position position="57"/>
    </location>
</feature>
<feature type="active site" evidence="1">
    <location>
        <position position="129"/>
    </location>
</feature>
<feature type="binding site" evidence="1">
    <location>
        <position position="53"/>
    </location>
    <ligand>
        <name>Mg(2+)</name>
        <dbReference type="ChEBI" id="CHEBI:18420"/>
    </ligand>
</feature>
<feature type="binding site" evidence="1">
    <location>
        <position position="126"/>
    </location>
    <ligand>
        <name>Mg(2+)</name>
        <dbReference type="ChEBI" id="CHEBI:18420"/>
    </ligand>
</feature>
<feature type="binding site" evidence="1">
    <location>
        <position position="129"/>
    </location>
    <ligand>
        <name>Mg(2+)</name>
        <dbReference type="ChEBI" id="CHEBI:18420"/>
    </ligand>
</feature>
<proteinExistence type="inferred from homology"/>
<reference key="1">
    <citation type="submission" date="2008-05" db="EMBL/GenBank/DDBJ databases">
        <title>Genome sequence of Helicobacter pylori from the remote Amazon: traces of Asian ancestry of the first Americans.</title>
        <authorList>
            <person name="Kersulyte D."/>
            <person name="Kalia A."/>
            <person name="Gilman R.H."/>
            <person name="Berg D.E."/>
        </authorList>
    </citation>
    <scope>NUCLEOTIDE SEQUENCE [LARGE SCALE GENOMIC DNA]</scope>
    <source>
        <strain>Shi470</strain>
    </source>
</reference>
<name>RNC_HELPS</name>
<keyword id="KW-0963">Cytoplasm</keyword>
<keyword id="KW-0255">Endonuclease</keyword>
<keyword id="KW-0378">Hydrolase</keyword>
<keyword id="KW-0460">Magnesium</keyword>
<keyword id="KW-0479">Metal-binding</keyword>
<keyword id="KW-0507">mRNA processing</keyword>
<keyword id="KW-0540">Nuclease</keyword>
<keyword id="KW-0694">RNA-binding</keyword>
<keyword id="KW-0698">rRNA processing</keyword>
<keyword id="KW-0699">rRNA-binding</keyword>
<keyword id="KW-0819">tRNA processing</keyword>
<accession>B2UTG4</accession>
<comment type="function">
    <text evidence="1">Digests double-stranded RNA. Involved in the processing of primary rRNA transcript to yield the immediate precursors to the large and small rRNAs (23S and 16S). Processes some mRNAs, and tRNAs when they are encoded in the rRNA operon. Processes pre-crRNA and tracrRNA of type II CRISPR loci if present in the organism.</text>
</comment>
<comment type="catalytic activity">
    <reaction evidence="1">
        <text>Endonucleolytic cleavage to 5'-phosphomonoester.</text>
        <dbReference type="EC" id="3.1.26.3"/>
    </reaction>
</comment>
<comment type="cofactor">
    <cofactor evidence="1">
        <name>Mg(2+)</name>
        <dbReference type="ChEBI" id="CHEBI:18420"/>
    </cofactor>
</comment>
<comment type="subunit">
    <text evidence="1">Homodimer.</text>
</comment>
<comment type="subcellular location">
    <subcellularLocation>
        <location evidence="1">Cytoplasm</location>
    </subcellularLocation>
</comment>
<comment type="similarity">
    <text evidence="1">Belongs to the ribonuclease III family.</text>
</comment>
<protein>
    <recommendedName>
        <fullName evidence="1">Ribonuclease 3</fullName>
        <ecNumber evidence="1">3.1.26.3</ecNumber>
    </recommendedName>
    <alternativeName>
        <fullName evidence="1">Ribonuclease III</fullName>
        <shortName evidence="1">RNase III</shortName>
    </alternativeName>
</protein>
<gene>
    <name evidence="1" type="primary">rnc</name>
    <name type="ordered locus">HPSH_03545</name>
</gene>
<organism>
    <name type="scientific">Helicobacter pylori (strain Shi470)</name>
    <dbReference type="NCBI Taxonomy" id="512562"/>
    <lineage>
        <taxon>Bacteria</taxon>
        <taxon>Pseudomonadati</taxon>
        <taxon>Campylobacterota</taxon>
        <taxon>Epsilonproteobacteria</taxon>
        <taxon>Campylobacterales</taxon>
        <taxon>Helicobacteraceae</taxon>
        <taxon>Helicobacter</taxon>
    </lineage>
</organism>
<evidence type="ECO:0000255" key="1">
    <source>
        <dbReference type="HAMAP-Rule" id="MF_00104"/>
    </source>
</evidence>
<dbReference type="EC" id="3.1.26.3" evidence="1"/>
<dbReference type="EMBL" id="CP001072">
    <property type="protein sequence ID" value="ACD48146.1"/>
    <property type="molecule type" value="Genomic_DNA"/>
</dbReference>
<dbReference type="RefSeq" id="WP_000792209.1">
    <property type="nucleotide sequence ID" value="NC_010698.2"/>
</dbReference>
<dbReference type="SMR" id="B2UTG4"/>
<dbReference type="KEGG" id="hps:HPSH_03545"/>
<dbReference type="HOGENOM" id="CLU_000907_1_3_7"/>
<dbReference type="GO" id="GO:0005737">
    <property type="term" value="C:cytoplasm"/>
    <property type="evidence" value="ECO:0007669"/>
    <property type="project" value="UniProtKB-SubCell"/>
</dbReference>
<dbReference type="GO" id="GO:0003725">
    <property type="term" value="F:double-stranded RNA binding"/>
    <property type="evidence" value="ECO:0007669"/>
    <property type="project" value="TreeGrafter"/>
</dbReference>
<dbReference type="GO" id="GO:0046872">
    <property type="term" value="F:metal ion binding"/>
    <property type="evidence" value="ECO:0007669"/>
    <property type="project" value="UniProtKB-KW"/>
</dbReference>
<dbReference type="GO" id="GO:0004525">
    <property type="term" value="F:ribonuclease III activity"/>
    <property type="evidence" value="ECO:0007669"/>
    <property type="project" value="UniProtKB-UniRule"/>
</dbReference>
<dbReference type="GO" id="GO:0019843">
    <property type="term" value="F:rRNA binding"/>
    <property type="evidence" value="ECO:0007669"/>
    <property type="project" value="UniProtKB-KW"/>
</dbReference>
<dbReference type="GO" id="GO:0006397">
    <property type="term" value="P:mRNA processing"/>
    <property type="evidence" value="ECO:0007669"/>
    <property type="project" value="UniProtKB-UniRule"/>
</dbReference>
<dbReference type="GO" id="GO:0010468">
    <property type="term" value="P:regulation of gene expression"/>
    <property type="evidence" value="ECO:0007669"/>
    <property type="project" value="TreeGrafter"/>
</dbReference>
<dbReference type="GO" id="GO:0006364">
    <property type="term" value="P:rRNA processing"/>
    <property type="evidence" value="ECO:0007669"/>
    <property type="project" value="UniProtKB-UniRule"/>
</dbReference>
<dbReference type="GO" id="GO:0008033">
    <property type="term" value="P:tRNA processing"/>
    <property type="evidence" value="ECO:0007669"/>
    <property type="project" value="UniProtKB-KW"/>
</dbReference>
<dbReference type="CDD" id="cd10845">
    <property type="entry name" value="DSRM_RNAse_III_family"/>
    <property type="match status" value="1"/>
</dbReference>
<dbReference type="CDD" id="cd00593">
    <property type="entry name" value="RIBOc"/>
    <property type="match status" value="1"/>
</dbReference>
<dbReference type="FunFam" id="1.10.1520.10:FF:000001">
    <property type="entry name" value="Ribonuclease 3"/>
    <property type="match status" value="1"/>
</dbReference>
<dbReference type="FunFam" id="3.30.160.20:FF:000003">
    <property type="entry name" value="Ribonuclease 3"/>
    <property type="match status" value="1"/>
</dbReference>
<dbReference type="Gene3D" id="3.30.160.20">
    <property type="match status" value="1"/>
</dbReference>
<dbReference type="Gene3D" id="1.10.1520.10">
    <property type="entry name" value="Ribonuclease III domain"/>
    <property type="match status" value="1"/>
</dbReference>
<dbReference type="HAMAP" id="MF_00104">
    <property type="entry name" value="RNase_III"/>
    <property type="match status" value="1"/>
</dbReference>
<dbReference type="InterPro" id="IPR014720">
    <property type="entry name" value="dsRBD_dom"/>
</dbReference>
<dbReference type="InterPro" id="IPR011907">
    <property type="entry name" value="RNase_III"/>
</dbReference>
<dbReference type="InterPro" id="IPR000999">
    <property type="entry name" value="RNase_III_dom"/>
</dbReference>
<dbReference type="InterPro" id="IPR036389">
    <property type="entry name" value="RNase_III_sf"/>
</dbReference>
<dbReference type="NCBIfam" id="TIGR02191">
    <property type="entry name" value="RNaseIII"/>
    <property type="match status" value="1"/>
</dbReference>
<dbReference type="PANTHER" id="PTHR11207:SF0">
    <property type="entry name" value="RIBONUCLEASE 3"/>
    <property type="match status" value="1"/>
</dbReference>
<dbReference type="PANTHER" id="PTHR11207">
    <property type="entry name" value="RIBONUCLEASE III"/>
    <property type="match status" value="1"/>
</dbReference>
<dbReference type="Pfam" id="PF00035">
    <property type="entry name" value="dsrm"/>
    <property type="match status" value="1"/>
</dbReference>
<dbReference type="Pfam" id="PF14622">
    <property type="entry name" value="Ribonucleas_3_3"/>
    <property type="match status" value="1"/>
</dbReference>
<dbReference type="SMART" id="SM00358">
    <property type="entry name" value="DSRM"/>
    <property type="match status" value="1"/>
</dbReference>
<dbReference type="SMART" id="SM00535">
    <property type="entry name" value="RIBOc"/>
    <property type="match status" value="1"/>
</dbReference>
<dbReference type="SUPFAM" id="SSF54768">
    <property type="entry name" value="dsRNA-binding domain-like"/>
    <property type="match status" value="1"/>
</dbReference>
<dbReference type="SUPFAM" id="SSF69065">
    <property type="entry name" value="RNase III domain-like"/>
    <property type="match status" value="1"/>
</dbReference>
<dbReference type="PROSITE" id="PS50137">
    <property type="entry name" value="DS_RBD"/>
    <property type="match status" value="1"/>
</dbReference>
<dbReference type="PROSITE" id="PS00517">
    <property type="entry name" value="RNASE_3_1"/>
    <property type="match status" value="1"/>
</dbReference>
<dbReference type="PROSITE" id="PS50142">
    <property type="entry name" value="RNASE_3_2"/>
    <property type="match status" value="1"/>
</dbReference>
<sequence>MKNKRSQNSPYITNSPYATLEKALGYSFKDKRLLEQALTHKSCKLALNNERLEFLGDAVLGLVIGELLYHKFYQYDEGKLSKLRASIVSAHGFTKLAKVIALQDYLHISSSEEISNGREKPSILSSAFEALMAGVYLEAGLAKVQKIIQNLLNRAYKRLDLEHLFMDYKTALQELTQAQFCVIPTYQLLKEKGPDHHKEFEMALYIQDKIYATAKGKSKKEAEQQCAYQALQKLKEVK</sequence>